<evidence type="ECO:0000255" key="1">
    <source>
        <dbReference type="PROSITE-ProRule" id="PRU00208"/>
    </source>
</evidence>
<evidence type="ECO:0000255" key="2">
    <source>
        <dbReference type="PROSITE-ProRule" id="PRU01024"/>
    </source>
</evidence>
<dbReference type="EC" id="2.1.1.-"/>
<dbReference type="EMBL" id="CP000003">
    <property type="protein sequence ID" value="AAT87205.1"/>
    <property type="molecule type" value="Genomic_DNA"/>
</dbReference>
<dbReference type="SMR" id="Q5XBK8"/>
<dbReference type="KEGG" id="spa:M6_Spy1070"/>
<dbReference type="HOGENOM" id="CLU_014689_7_0_9"/>
<dbReference type="Proteomes" id="UP000001167">
    <property type="component" value="Chromosome"/>
</dbReference>
<dbReference type="GO" id="GO:0070041">
    <property type="term" value="F:rRNA (uridine-C5-)-methyltransferase activity"/>
    <property type="evidence" value="ECO:0007669"/>
    <property type="project" value="TreeGrafter"/>
</dbReference>
<dbReference type="GO" id="GO:0070475">
    <property type="term" value="P:rRNA base methylation"/>
    <property type="evidence" value="ECO:0007669"/>
    <property type="project" value="TreeGrafter"/>
</dbReference>
<dbReference type="CDD" id="cd02440">
    <property type="entry name" value="AdoMet_MTases"/>
    <property type="match status" value="1"/>
</dbReference>
<dbReference type="FunFam" id="3.40.50.150:FF:000009">
    <property type="entry name" value="23S rRNA (Uracil(1939)-C(5))-methyltransferase RlmD"/>
    <property type="match status" value="1"/>
</dbReference>
<dbReference type="FunFam" id="2.40.50.1070:FF:000003">
    <property type="entry name" value="23S rRNA (Uracil-5-)-methyltransferase RumA"/>
    <property type="match status" value="1"/>
</dbReference>
<dbReference type="Gene3D" id="2.40.50.1070">
    <property type="match status" value="1"/>
</dbReference>
<dbReference type="Gene3D" id="2.40.50.140">
    <property type="entry name" value="Nucleic acid-binding proteins"/>
    <property type="match status" value="1"/>
</dbReference>
<dbReference type="Gene3D" id="3.40.50.150">
    <property type="entry name" value="Vaccinia Virus protein VP39"/>
    <property type="match status" value="1"/>
</dbReference>
<dbReference type="InterPro" id="IPR030390">
    <property type="entry name" value="MeTrfase_TrmA_AS"/>
</dbReference>
<dbReference type="InterPro" id="IPR030391">
    <property type="entry name" value="MeTrfase_TrmA_CS"/>
</dbReference>
<dbReference type="InterPro" id="IPR012340">
    <property type="entry name" value="NA-bd_OB-fold"/>
</dbReference>
<dbReference type="InterPro" id="IPR029063">
    <property type="entry name" value="SAM-dependent_MTases_sf"/>
</dbReference>
<dbReference type="InterPro" id="IPR002792">
    <property type="entry name" value="TRAM_dom"/>
</dbReference>
<dbReference type="InterPro" id="IPR010280">
    <property type="entry name" value="U5_MeTrfase_fam"/>
</dbReference>
<dbReference type="NCBIfam" id="TIGR00479">
    <property type="entry name" value="rumA"/>
    <property type="match status" value="1"/>
</dbReference>
<dbReference type="PANTHER" id="PTHR11061">
    <property type="entry name" value="RNA M5U METHYLTRANSFERASE"/>
    <property type="match status" value="1"/>
</dbReference>
<dbReference type="PANTHER" id="PTHR11061:SF30">
    <property type="entry name" value="TRNA (URACIL(54)-C(5))-METHYLTRANSFERASE"/>
    <property type="match status" value="1"/>
</dbReference>
<dbReference type="Pfam" id="PF01938">
    <property type="entry name" value="TRAM"/>
    <property type="match status" value="1"/>
</dbReference>
<dbReference type="Pfam" id="PF05958">
    <property type="entry name" value="tRNA_U5-meth_tr"/>
    <property type="match status" value="1"/>
</dbReference>
<dbReference type="SUPFAM" id="SSF50249">
    <property type="entry name" value="Nucleic acid-binding proteins"/>
    <property type="match status" value="1"/>
</dbReference>
<dbReference type="SUPFAM" id="SSF53335">
    <property type="entry name" value="S-adenosyl-L-methionine-dependent methyltransferases"/>
    <property type="match status" value="1"/>
</dbReference>
<dbReference type="PROSITE" id="PS51687">
    <property type="entry name" value="SAM_MT_RNA_M5U"/>
    <property type="match status" value="1"/>
</dbReference>
<dbReference type="PROSITE" id="PS50926">
    <property type="entry name" value="TRAM"/>
    <property type="match status" value="1"/>
</dbReference>
<dbReference type="PROSITE" id="PS01230">
    <property type="entry name" value="TRMA_1"/>
    <property type="match status" value="1"/>
</dbReference>
<dbReference type="PROSITE" id="PS01231">
    <property type="entry name" value="TRMA_2"/>
    <property type="match status" value="1"/>
</dbReference>
<feature type="chain" id="PRO_0000162039" description="Uncharacterized RNA methyltransferase M6_Spy1070">
    <location>
        <begin position="1"/>
        <end position="462"/>
    </location>
</feature>
<feature type="domain" description="TRAM" evidence="1">
    <location>
        <begin position="12"/>
        <end position="70"/>
    </location>
</feature>
<feature type="active site" description="Nucleophile" evidence="2">
    <location>
        <position position="419"/>
    </location>
</feature>
<feature type="binding site" evidence="2">
    <location>
        <position position="294"/>
    </location>
    <ligand>
        <name>S-adenosyl-L-methionine</name>
        <dbReference type="ChEBI" id="CHEBI:59789"/>
    </ligand>
</feature>
<feature type="binding site" evidence="2">
    <location>
        <position position="323"/>
    </location>
    <ligand>
        <name>S-adenosyl-L-methionine</name>
        <dbReference type="ChEBI" id="CHEBI:59789"/>
    </ligand>
</feature>
<feature type="binding site" evidence="2">
    <location>
        <position position="344"/>
    </location>
    <ligand>
        <name>S-adenosyl-L-methionine</name>
        <dbReference type="ChEBI" id="CHEBI:59789"/>
    </ligand>
</feature>
<feature type="binding site" evidence="2">
    <location>
        <position position="392"/>
    </location>
    <ligand>
        <name>S-adenosyl-L-methionine</name>
        <dbReference type="ChEBI" id="CHEBI:59789"/>
    </ligand>
</feature>
<accession>Q5XBK8</accession>
<protein>
    <recommendedName>
        <fullName>Uncharacterized RNA methyltransferase M6_Spy1070</fullName>
        <ecNumber>2.1.1.-</ecNumber>
    </recommendedName>
</protein>
<organism>
    <name type="scientific">Streptococcus pyogenes serotype M6 (strain ATCC BAA-946 / MGAS10394)</name>
    <dbReference type="NCBI Taxonomy" id="286636"/>
    <lineage>
        <taxon>Bacteria</taxon>
        <taxon>Bacillati</taxon>
        <taxon>Bacillota</taxon>
        <taxon>Bacilli</taxon>
        <taxon>Lactobacillales</taxon>
        <taxon>Streptococcaceae</taxon>
        <taxon>Streptococcus</taxon>
    </lineage>
</organism>
<name>Y1070_STRP6</name>
<sequence length="462" mass="51751">MVSPRKGKRIRMLKKNDIIQVAISDLSHEGAGVAKHDGFVFFVDNALPEEVIDMRVLKVNKNSGFGKVEAYHYLSPARNADVNLTYLRTGIADLGHLTYEDQLTFKKKQVQDSLYKIAGISDVTVESTIGMTEPLAYRNKAQVPVRRVNGQLETGFFRKHSHDLIPISDYYIQDKEIDRLINFTRDLLRRFDIKPYDETEQTGLLRNIVVRRGHYSGEMMLVLVTTRPKVFRVDQVIEKIVEAFPAVVSIIQNINDKNTNAIFGKDFKTLYGKDTITDSMLGNNYAISAQSFYQVNTVMAEKLYQTAIAFSDLSKDDIVIDAYSGIGTIGLSFAKTVKAVYGVEVIEAAVRDAQHNAALNGITNAYFVADTAEHAMATWAKDGIKPSVILVDPPRKGLTESFIQASVAMGPQKITYVSCNPATMARDIKRYQELGYKLAKVQPVDLFPQTHHVECVVLLIKE</sequence>
<reference key="1">
    <citation type="journal article" date="2004" name="J. Infect. Dis.">
        <title>Progress toward characterization of the group A Streptococcus metagenome: complete genome sequence of a macrolide-resistant serotype M6 strain.</title>
        <authorList>
            <person name="Banks D.J."/>
            <person name="Porcella S.F."/>
            <person name="Barbian K.D."/>
            <person name="Beres S.B."/>
            <person name="Philips L.E."/>
            <person name="Voyich J.M."/>
            <person name="DeLeo F.R."/>
            <person name="Martin J.M."/>
            <person name="Somerville G.A."/>
            <person name="Musser J.M."/>
        </authorList>
    </citation>
    <scope>NUCLEOTIDE SEQUENCE [LARGE SCALE GENOMIC DNA]</scope>
    <source>
        <strain>ATCC BAA-946 / MGAS10394</strain>
    </source>
</reference>
<proteinExistence type="inferred from homology"/>
<gene>
    <name type="ordered locus">M6_Spy1070</name>
</gene>
<keyword id="KW-0489">Methyltransferase</keyword>
<keyword id="KW-0949">S-adenosyl-L-methionine</keyword>
<keyword id="KW-0808">Transferase</keyword>
<comment type="similarity">
    <text evidence="2">Belongs to the class I-like SAM-binding methyltransferase superfamily. RNA M5U methyltransferase family.</text>
</comment>